<proteinExistence type="inferred from homology"/>
<sequence>MEQEDQQYEEDSSQFNKNNYVPDDNSGEKEQPATTTEITTTTTTTTPTAIDNNDSDLTEDVINAVSKYKDGTSSKSVKKTRRKFAMNIATDEVFNLPPMEQQQQQQHLQPPLSPNSASNTNFGAAATFSPTSILSKNNKIITSQQTSSTSISPLKPSPLSFSSGILPPSSRIYESPPTLGKYDKVILVILSQQYLQNQVNIFPIKLIDRERINLIHQNILSNEFQLLKSLKHSGIVNYIGMINDNTGFGIVQEFYENGSLSDIYNRSGAFQESLVAKYTLQILEALGYIHSQGIVHRNLKSNNVLLAKGGKVKISDFAIGIRSSAIEPSIRFSLNGYPFWTSPEVLSMKPFNHKVDSWSIGCLIMELIVGHPPFSHLGPMEALIEIINPSTTILPNCLDENEQSLFSLELNQFLELCFKKEPSDRASVHDLLRHPWLSMFNDSSSSSSSSSSQAHPTVQSNNLNGNVNSRTHGEFYSLDFLSQFEQNEKEISKILSSGDQLDSTSNQIDLKKFQFKHYNKKQQQQYNYNYNNYNNNNNNNNNTNDNDNECGEQTEEINLSSLSKDEQIERLKAIIDQNETMANNLKYTMQEVLQEQTKYYEICESMKSKTLEILNQNKTGARISAHSNSLLKRTNQMANDLGRKYEILQSNIKRLEDYLITKDDCAKKLANVVYRNKISFDSLLNPTLAANLLYQIGSKTWKKGQEKRAFATLKDNFLFFFKNEKSSYPIDVIYLNDKRNISITSIQDSKKKAYIICIGTTIHDQNNLDPSNNNESVNLSTSPGSLVNSNSNPSISNSLNNNNNNNNNNNNNNNGNPNVIITTNNNCNSNSNGNNIATPPISIPNGKEVKEGKEIKEIKEPKEKDKDKEKDKDKEKDKDKEKDKDKEKEKDKDKENNNNNNSNNNNNNGNNYNSSETIWCLLAFDNSKNMENWYGVLDSVVPWYDKRAYEISKPMLPIENKKHQKQKSLDSTNKQSPGSLGGAGGDVSWKKESGGIKFQGVVGVRLDDLMTRESPTAELPYFLSKMLKFLEKNVDEEGILRLSGSSTEILEMKQQLQRGESIDYTYKDPHAVTGLLKLFLRELPESILPEHLRIQSTEILSNGRFGEKEKIKEIQTLLSNLSRPHYNVLKHMLFFAKLVVDRSEYNKMVIANVTTCFSPTLRIPPGLFNFLINTYDLSFPKFNLSV</sequence>
<organism>
    <name type="scientific">Dictyostelium discoideum</name>
    <name type="common">Social amoeba</name>
    <dbReference type="NCBI Taxonomy" id="44689"/>
    <lineage>
        <taxon>Eukaryota</taxon>
        <taxon>Amoebozoa</taxon>
        <taxon>Evosea</taxon>
        <taxon>Eumycetozoa</taxon>
        <taxon>Dictyostelia</taxon>
        <taxon>Dictyosteliales</taxon>
        <taxon>Dictyosteliaceae</taxon>
        <taxon>Dictyostelium</taxon>
    </lineage>
</organism>
<dbReference type="EMBL" id="AAFI02000199">
    <property type="protein sequence ID" value="EAL60944.1"/>
    <property type="molecule type" value="Genomic_DNA"/>
</dbReference>
<dbReference type="RefSeq" id="XP_629342.1">
    <property type="nucleotide sequence ID" value="XM_629340.1"/>
</dbReference>
<dbReference type="SMR" id="Q54C77"/>
<dbReference type="FunCoup" id="Q54C77">
    <property type="interactions" value="610"/>
</dbReference>
<dbReference type="STRING" id="44689.Q54C77"/>
<dbReference type="PaxDb" id="44689-DDB0229972"/>
<dbReference type="EnsemblProtists" id="EAL60944">
    <property type="protein sequence ID" value="EAL60944"/>
    <property type="gene ID" value="DDB_G0293184"/>
</dbReference>
<dbReference type="GeneID" id="8629066"/>
<dbReference type="KEGG" id="ddi:DDB_G0293184"/>
<dbReference type="dictyBase" id="DDB_G0293184"/>
<dbReference type="VEuPathDB" id="AmoebaDB:DDB_G0293184"/>
<dbReference type="eggNOG" id="KOG0198">
    <property type="taxonomic scope" value="Eukaryota"/>
</dbReference>
<dbReference type="eggNOG" id="KOG4269">
    <property type="taxonomic scope" value="Eukaryota"/>
</dbReference>
<dbReference type="HOGENOM" id="CLU_272428_0_0_1"/>
<dbReference type="InParanoid" id="Q54C77"/>
<dbReference type="OMA" id="KDDCAKK"/>
<dbReference type="PRO" id="PR:Q54C77"/>
<dbReference type="Proteomes" id="UP000002195">
    <property type="component" value="Chromosome 6"/>
</dbReference>
<dbReference type="GO" id="GO:0005737">
    <property type="term" value="C:cytoplasm"/>
    <property type="evidence" value="ECO:0000318"/>
    <property type="project" value="GO_Central"/>
</dbReference>
<dbReference type="GO" id="GO:0005524">
    <property type="term" value="F:ATP binding"/>
    <property type="evidence" value="ECO:0007669"/>
    <property type="project" value="UniProtKB-KW"/>
</dbReference>
<dbReference type="GO" id="GO:0005096">
    <property type="term" value="F:GTPase activator activity"/>
    <property type="evidence" value="ECO:0007669"/>
    <property type="project" value="UniProtKB-KW"/>
</dbReference>
<dbReference type="GO" id="GO:0004674">
    <property type="term" value="F:protein serine/threonine kinase activity"/>
    <property type="evidence" value="ECO:0000318"/>
    <property type="project" value="GO_Central"/>
</dbReference>
<dbReference type="GO" id="GO:0035556">
    <property type="term" value="P:intracellular signal transduction"/>
    <property type="evidence" value="ECO:0000318"/>
    <property type="project" value="GO_Central"/>
</dbReference>
<dbReference type="CDD" id="cd00159">
    <property type="entry name" value="RhoGAP"/>
    <property type="match status" value="1"/>
</dbReference>
<dbReference type="FunFam" id="1.10.510.10:FF:002924">
    <property type="entry name" value="Probable inactive serine/threonine-protein kinase DDB_G0293184"/>
    <property type="match status" value="1"/>
</dbReference>
<dbReference type="Gene3D" id="1.10.555.10">
    <property type="entry name" value="Rho GTPase activation protein"/>
    <property type="match status" value="1"/>
</dbReference>
<dbReference type="Gene3D" id="1.10.510.10">
    <property type="entry name" value="Transferase(Phosphotransferase) domain 1"/>
    <property type="match status" value="1"/>
</dbReference>
<dbReference type="InterPro" id="IPR011009">
    <property type="entry name" value="Kinase-like_dom_sf"/>
</dbReference>
<dbReference type="InterPro" id="IPR000719">
    <property type="entry name" value="Prot_kinase_dom"/>
</dbReference>
<dbReference type="InterPro" id="IPR008936">
    <property type="entry name" value="Rho_GTPase_activation_prot"/>
</dbReference>
<dbReference type="InterPro" id="IPR000198">
    <property type="entry name" value="RhoGAP_dom"/>
</dbReference>
<dbReference type="InterPro" id="IPR050629">
    <property type="entry name" value="STE20/SPS1-PAK"/>
</dbReference>
<dbReference type="PANTHER" id="PTHR48012:SF26">
    <property type="entry name" value="SERINE_THREONINE-PROTEIN KINASE DDB_G0283821-RELATED"/>
    <property type="match status" value="1"/>
</dbReference>
<dbReference type="PANTHER" id="PTHR48012">
    <property type="entry name" value="STERILE20-LIKE KINASE, ISOFORM B-RELATED"/>
    <property type="match status" value="1"/>
</dbReference>
<dbReference type="Pfam" id="PF00069">
    <property type="entry name" value="Pkinase"/>
    <property type="match status" value="1"/>
</dbReference>
<dbReference type="Pfam" id="PF00620">
    <property type="entry name" value="RhoGAP"/>
    <property type="match status" value="1"/>
</dbReference>
<dbReference type="SMART" id="SM00324">
    <property type="entry name" value="RhoGAP"/>
    <property type="match status" value="1"/>
</dbReference>
<dbReference type="SUPFAM" id="SSF48350">
    <property type="entry name" value="GTPase activation domain, GAP"/>
    <property type="match status" value="1"/>
</dbReference>
<dbReference type="SUPFAM" id="SSF50729">
    <property type="entry name" value="PH domain-like"/>
    <property type="match status" value="1"/>
</dbReference>
<dbReference type="SUPFAM" id="SSF56112">
    <property type="entry name" value="Protein kinase-like (PK-like)"/>
    <property type="match status" value="1"/>
</dbReference>
<dbReference type="PROSITE" id="PS50011">
    <property type="entry name" value="PROTEIN_KINASE_DOM"/>
    <property type="match status" value="1"/>
</dbReference>
<dbReference type="PROSITE" id="PS50238">
    <property type="entry name" value="RHOGAP"/>
    <property type="match status" value="1"/>
</dbReference>
<gene>
    <name type="ORF">DDB_G0293184</name>
</gene>
<feature type="chain" id="PRO_0000370210" description="Probable inactive serine/threonine-protein kinase DDB_G0293184">
    <location>
        <begin position="1"/>
        <end position="1186"/>
    </location>
</feature>
<feature type="domain" description="Protein kinase" evidence="4">
    <location>
        <begin position="173"/>
        <end position="437"/>
    </location>
</feature>
<feature type="domain" description="Rho-GAP" evidence="5">
    <location>
        <begin position="1004"/>
        <end position="1186"/>
    </location>
</feature>
<feature type="region of interest" description="Disordered" evidence="6">
    <location>
        <begin position="1"/>
        <end position="55"/>
    </location>
</feature>
<feature type="region of interest" description="Disordered" evidence="6">
    <location>
        <begin position="99"/>
        <end position="122"/>
    </location>
</feature>
<feature type="region of interest" description="Disordered" evidence="6">
    <location>
        <begin position="447"/>
        <end position="468"/>
    </location>
</feature>
<feature type="region of interest" description="Disordered" evidence="6">
    <location>
        <begin position="530"/>
        <end position="551"/>
    </location>
</feature>
<feature type="region of interest" description="Disordered" evidence="6">
    <location>
        <begin position="766"/>
        <end position="911"/>
    </location>
</feature>
<feature type="region of interest" description="Disordered" evidence="6">
    <location>
        <begin position="959"/>
        <end position="988"/>
    </location>
</feature>
<feature type="coiled-coil region" evidence="3">
    <location>
        <begin position="631"/>
        <end position="659"/>
    </location>
</feature>
<feature type="coiled-coil region" evidence="3">
    <location>
        <begin position="875"/>
        <end position="909"/>
    </location>
</feature>
<feature type="compositionally biased region" description="Acidic residues" evidence="6">
    <location>
        <begin position="1"/>
        <end position="12"/>
    </location>
</feature>
<feature type="compositionally biased region" description="Low complexity" evidence="6">
    <location>
        <begin position="34"/>
        <end position="48"/>
    </location>
</feature>
<feature type="compositionally biased region" description="Low complexity" evidence="6">
    <location>
        <begin position="99"/>
        <end position="110"/>
    </location>
</feature>
<feature type="compositionally biased region" description="Polar residues" evidence="6">
    <location>
        <begin position="453"/>
        <end position="468"/>
    </location>
</feature>
<feature type="compositionally biased region" description="Low complexity" evidence="6">
    <location>
        <begin position="530"/>
        <end position="545"/>
    </location>
</feature>
<feature type="compositionally biased region" description="Polar residues" evidence="6">
    <location>
        <begin position="766"/>
        <end position="784"/>
    </location>
</feature>
<feature type="compositionally biased region" description="Low complexity" evidence="6">
    <location>
        <begin position="785"/>
        <end position="836"/>
    </location>
</feature>
<feature type="compositionally biased region" description="Basic and acidic residues" evidence="6">
    <location>
        <begin position="847"/>
        <end position="896"/>
    </location>
</feature>
<feature type="compositionally biased region" description="Low complexity" evidence="6">
    <location>
        <begin position="897"/>
        <end position="911"/>
    </location>
</feature>
<feature type="compositionally biased region" description="Polar residues" evidence="6">
    <location>
        <begin position="969"/>
        <end position="978"/>
    </location>
</feature>
<feature type="binding site" evidence="1 4">
    <location>
        <begin position="179"/>
        <end position="187"/>
    </location>
    <ligand>
        <name>ATP</name>
        <dbReference type="ChEBI" id="CHEBI:30616"/>
    </ligand>
</feature>
<feature type="binding site" evidence="1 4">
    <location>
        <position position="205"/>
    </location>
    <ligand>
        <name>ATP</name>
        <dbReference type="ChEBI" id="CHEBI:30616"/>
    </ligand>
</feature>
<feature type="site" description="Arginine finger; crucial for GTP hydrolysis by stabilizing the transition state" evidence="5">
    <location>
        <position position="1041"/>
    </location>
</feature>
<evidence type="ECO:0000250" key="1">
    <source>
        <dbReference type="UniProtKB" id="P28523"/>
    </source>
</evidence>
<evidence type="ECO:0000250" key="2">
    <source>
        <dbReference type="UniProtKB" id="Q54QI2"/>
    </source>
</evidence>
<evidence type="ECO:0000255" key="3"/>
<evidence type="ECO:0000255" key="4">
    <source>
        <dbReference type="PROSITE-ProRule" id="PRU00159"/>
    </source>
</evidence>
<evidence type="ECO:0000255" key="5">
    <source>
        <dbReference type="PROSITE-ProRule" id="PRU00172"/>
    </source>
</evidence>
<evidence type="ECO:0000256" key="6">
    <source>
        <dbReference type="SAM" id="MobiDB-lite"/>
    </source>
</evidence>
<reference key="1">
    <citation type="journal article" date="2005" name="Nature">
        <title>The genome of the social amoeba Dictyostelium discoideum.</title>
        <authorList>
            <person name="Eichinger L."/>
            <person name="Pachebat J.A."/>
            <person name="Gloeckner G."/>
            <person name="Rajandream M.A."/>
            <person name="Sucgang R."/>
            <person name="Berriman M."/>
            <person name="Song J."/>
            <person name="Olsen R."/>
            <person name="Szafranski K."/>
            <person name="Xu Q."/>
            <person name="Tunggal B."/>
            <person name="Kummerfeld S."/>
            <person name="Madera M."/>
            <person name="Konfortov B.A."/>
            <person name="Rivero F."/>
            <person name="Bankier A.T."/>
            <person name="Lehmann R."/>
            <person name="Hamlin N."/>
            <person name="Davies R."/>
            <person name="Gaudet P."/>
            <person name="Fey P."/>
            <person name="Pilcher K."/>
            <person name="Chen G."/>
            <person name="Saunders D."/>
            <person name="Sodergren E.J."/>
            <person name="Davis P."/>
            <person name="Kerhornou A."/>
            <person name="Nie X."/>
            <person name="Hall N."/>
            <person name="Anjard C."/>
            <person name="Hemphill L."/>
            <person name="Bason N."/>
            <person name="Farbrother P."/>
            <person name="Desany B."/>
            <person name="Just E."/>
            <person name="Morio T."/>
            <person name="Rost R."/>
            <person name="Churcher C.M."/>
            <person name="Cooper J."/>
            <person name="Haydock S."/>
            <person name="van Driessche N."/>
            <person name="Cronin A."/>
            <person name="Goodhead I."/>
            <person name="Muzny D.M."/>
            <person name="Mourier T."/>
            <person name="Pain A."/>
            <person name="Lu M."/>
            <person name="Harper D."/>
            <person name="Lindsay R."/>
            <person name="Hauser H."/>
            <person name="James K.D."/>
            <person name="Quiles M."/>
            <person name="Madan Babu M."/>
            <person name="Saito T."/>
            <person name="Buchrieser C."/>
            <person name="Wardroper A."/>
            <person name="Felder M."/>
            <person name="Thangavelu M."/>
            <person name="Johnson D."/>
            <person name="Knights A."/>
            <person name="Loulseged H."/>
            <person name="Mungall K.L."/>
            <person name="Oliver K."/>
            <person name="Price C."/>
            <person name="Quail M.A."/>
            <person name="Urushihara H."/>
            <person name="Hernandez J."/>
            <person name="Rabbinowitsch E."/>
            <person name="Steffen D."/>
            <person name="Sanders M."/>
            <person name="Ma J."/>
            <person name="Kohara Y."/>
            <person name="Sharp S."/>
            <person name="Simmonds M.N."/>
            <person name="Spiegler S."/>
            <person name="Tivey A."/>
            <person name="Sugano S."/>
            <person name="White B."/>
            <person name="Walker D."/>
            <person name="Woodward J.R."/>
            <person name="Winckler T."/>
            <person name="Tanaka Y."/>
            <person name="Shaulsky G."/>
            <person name="Schleicher M."/>
            <person name="Weinstock G.M."/>
            <person name="Rosenthal A."/>
            <person name="Cox E.C."/>
            <person name="Chisholm R.L."/>
            <person name="Gibbs R.A."/>
            <person name="Loomis W.F."/>
            <person name="Platzer M."/>
            <person name="Kay R.R."/>
            <person name="Williams J.G."/>
            <person name="Dear P.H."/>
            <person name="Noegel A.A."/>
            <person name="Barrell B.G."/>
            <person name="Kuspa A."/>
        </authorList>
    </citation>
    <scope>NUCLEOTIDE SEQUENCE [LARGE SCALE GENOMIC DNA]</scope>
    <source>
        <strain>AX4</strain>
    </source>
</reference>
<reference key="2">
    <citation type="journal article" date="2006" name="PLoS Genet.">
        <title>The dictyostelium kinome -- analysis of the protein kinases from a simple model organism.</title>
        <authorList>
            <person name="Goldberg J.M."/>
            <person name="Manning G."/>
            <person name="Liu A."/>
            <person name="Fey P."/>
            <person name="Pilcher K.E."/>
            <person name="Xu Y."/>
            <person name="Smith J.L."/>
        </authorList>
    </citation>
    <scope>IDENTIFICATION</scope>
</reference>
<protein>
    <recommendedName>
        <fullName>Probable inactive serine/threonine-protein kinase DDB_G0293184</fullName>
    </recommendedName>
</protein>
<comment type="domain">
    <text>The protein kinase domain is predicted to be catalytically inactive as it lacks an expected active site aspartate residue.</text>
</comment>
<comment type="similarity">
    <text evidence="2">Belongs to the protein kinase superfamily. STE Ser/Thr protein kinase family.</text>
</comment>
<keyword id="KW-0067">ATP-binding</keyword>
<keyword id="KW-0175">Coiled coil</keyword>
<keyword id="KW-0343">GTPase activation</keyword>
<keyword id="KW-0547">Nucleotide-binding</keyword>
<keyword id="KW-1185">Reference proteome</keyword>
<accession>Q54C77</accession>
<name>Y3184_DICDI</name>